<evidence type="ECO:0000255" key="1">
    <source>
        <dbReference type="HAMAP-Rule" id="MF_00660"/>
    </source>
</evidence>
<evidence type="ECO:0000255" key="2">
    <source>
        <dbReference type="PROSITE-ProRule" id="PRU01266"/>
    </source>
</evidence>
<comment type="function">
    <text evidence="1">Catalyzes the cross-linking of a glutamate residue and a tyrosine residue in the PqqA protein as part of the biosynthesis of pyrroloquinoline quinone (PQQ).</text>
</comment>
<comment type="catalytic activity">
    <reaction evidence="1">
        <text>[PQQ precursor protein] + S-adenosyl-L-methionine = E-Y cross-linked-[PQQ precursor protein] + 5'-deoxyadenosine + L-methionine + H(+)</text>
        <dbReference type="Rhea" id="RHEA:56836"/>
        <dbReference type="Rhea" id="RHEA-COMP:14800"/>
        <dbReference type="Rhea" id="RHEA-COMP:14801"/>
        <dbReference type="ChEBI" id="CHEBI:15378"/>
        <dbReference type="ChEBI" id="CHEBI:17319"/>
        <dbReference type="ChEBI" id="CHEBI:57844"/>
        <dbReference type="ChEBI" id="CHEBI:59789"/>
        <dbReference type="ChEBI" id="CHEBI:141026"/>
        <dbReference type="ChEBI" id="CHEBI:141027"/>
        <dbReference type="EC" id="1.21.98.4"/>
    </reaction>
</comment>
<comment type="cofactor">
    <cofactor evidence="1">
        <name>[4Fe-4S] cluster</name>
        <dbReference type="ChEBI" id="CHEBI:49883"/>
    </cofactor>
    <text evidence="1">Binds 1 [4Fe-4S] cluster. The cluster is coordinated with 3 cysteines and an exchangeable S-adenosyl-L-methionine.</text>
</comment>
<comment type="pathway">
    <text evidence="1">Cofactor biosynthesis; pyrroloquinoline quinone biosynthesis.</text>
</comment>
<comment type="subunit">
    <text evidence="1">Interacts with PqqD. The interaction is necessary for activity of PqqE.</text>
</comment>
<comment type="similarity">
    <text evidence="1">Belongs to the radical SAM superfamily. PqqE family.</text>
</comment>
<protein>
    <recommendedName>
        <fullName evidence="1">PqqA peptide cyclase</fullName>
        <ecNumber evidence="1">1.21.98.4</ecNumber>
    </recommendedName>
    <alternativeName>
        <fullName evidence="1">Coenzyme PQQ synthesis protein E</fullName>
    </alternativeName>
    <alternativeName>
        <fullName evidence="1">Pyrroloquinoline quinone biosynthesis protein E</fullName>
    </alternativeName>
</protein>
<dbReference type="EC" id="1.21.98.4" evidence="1"/>
<dbReference type="EMBL" id="CP000964">
    <property type="protein sequence ID" value="ACI08593.1"/>
    <property type="molecule type" value="Genomic_DNA"/>
</dbReference>
<dbReference type="SMR" id="B5XX58"/>
<dbReference type="KEGG" id="kpe:KPK_2541"/>
<dbReference type="HOGENOM" id="CLU_009273_4_7_6"/>
<dbReference type="UniPathway" id="UPA00539"/>
<dbReference type="Proteomes" id="UP000001734">
    <property type="component" value="Chromosome"/>
</dbReference>
<dbReference type="GO" id="GO:0051539">
    <property type="term" value="F:4 iron, 4 sulfur cluster binding"/>
    <property type="evidence" value="ECO:0007669"/>
    <property type="project" value="UniProtKB-KW"/>
</dbReference>
<dbReference type="GO" id="GO:0009975">
    <property type="term" value="F:cyclase activity"/>
    <property type="evidence" value="ECO:0007669"/>
    <property type="project" value="UniProtKB-UniRule"/>
</dbReference>
<dbReference type="GO" id="GO:0005506">
    <property type="term" value="F:iron ion binding"/>
    <property type="evidence" value="ECO:0007669"/>
    <property type="project" value="UniProtKB-UniRule"/>
</dbReference>
<dbReference type="GO" id="GO:0016491">
    <property type="term" value="F:oxidoreductase activity"/>
    <property type="evidence" value="ECO:0007669"/>
    <property type="project" value="UniProtKB-KW"/>
</dbReference>
<dbReference type="GO" id="GO:1904047">
    <property type="term" value="F:S-adenosyl-L-methionine binding"/>
    <property type="evidence" value="ECO:0007669"/>
    <property type="project" value="UniProtKB-UniRule"/>
</dbReference>
<dbReference type="GO" id="GO:0018189">
    <property type="term" value="P:pyrroloquinoline quinone biosynthetic process"/>
    <property type="evidence" value="ECO:0007669"/>
    <property type="project" value="UniProtKB-UniRule"/>
</dbReference>
<dbReference type="CDD" id="cd01335">
    <property type="entry name" value="Radical_SAM"/>
    <property type="match status" value="1"/>
</dbReference>
<dbReference type="CDD" id="cd21119">
    <property type="entry name" value="SPASM_PqqE"/>
    <property type="match status" value="1"/>
</dbReference>
<dbReference type="Gene3D" id="3.20.20.70">
    <property type="entry name" value="Aldolase class I"/>
    <property type="match status" value="1"/>
</dbReference>
<dbReference type="HAMAP" id="MF_00660">
    <property type="entry name" value="PqqE"/>
    <property type="match status" value="1"/>
</dbReference>
<dbReference type="InterPro" id="IPR023885">
    <property type="entry name" value="4Fe4S-binding_SPASM_dom"/>
</dbReference>
<dbReference type="InterPro" id="IPR013785">
    <property type="entry name" value="Aldolase_TIM"/>
</dbReference>
<dbReference type="InterPro" id="IPR006638">
    <property type="entry name" value="Elp3/MiaA/NifB-like_rSAM"/>
</dbReference>
<dbReference type="InterPro" id="IPR000385">
    <property type="entry name" value="MoaA_NifB_PqqE_Fe-S-bd_CS"/>
</dbReference>
<dbReference type="InterPro" id="IPR011843">
    <property type="entry name" value="PQQ_synth_PqqE_bac"/>
</dbReference>
<dbReference type="InterPro" id="IPR017200">
    <property type="entry name" value="PqqE-like"/>
</dbReference>
<dbReference type="InterPro" id="IPR050377">
    <property type="entry name" value="Radical_SAM_PqqE_MftC-like"/>
</dbReference>
<dbReference type="InterPro" id="IPR007197">
    <property type="entry name" value="rSAM"/>
</dbReference>
<dbReference type="NCBIfam" id="TIGR02109">
    <property type="entry name" value="PQQ_syn_pqqE"/>
    <property type="match status" value="1"/>
</dbReference>
<dbReference type="PANTHER" id="PTHR11228:SF7">
    <property type="entry name" value="PQQA PEPTIDE CYCLASE"/>
    <property type="match status" value="1"/>
</dbReference>
<dbReference type="PANTHER" id="PTHR11228">
    <property type="entry name" value="RADICAL SAM DOMAIN PROTEIN"/>
    <property type="match status" value="1"/>
</dbReference>
<dbReference type="Pfam" id="PF13353">
    <property type="entry name" value="Fer4_12"/>
    <property type="match status" value="1"/>
</dbReference>
<dbReference type="Pfam" id="PF04055">
    <property type="entry name" value="Radical_SAM"/>
    <property type="match status" value="1"/>
</dbReference>
<dbReference type="Pfam" id="PF13186">
    <property type="entry name" value="SPASM"/>
    <property type="match status" value="1"/>
</dbReference>
<dbReference type="PIRSF" id="PIRSF037420">
    <property type="entry name" value="PQQ_syn_pqqE"/>
    <property type="match status" value="1"/>
</dbReference>
<dbReference type="SFLD" id="SFLDF00280">
    <property type="entry name" value="coenzyme_PQQ_synthesis_protein"/>
    <property type="match status" value="1"/>
</dbReference>
<dbReference type="SFLD" id="SFLDG01386">
    <property type="entry name" value="main_SPASM_domain-containing"/>
    <property type="match status" value="1"/>
</dbReference>
<dbReference type="SMART" id="SM00729">
    <property type="entry name" value="Elp3"/>
    <property type="match status" value="1"/>
</dbReference>
<dbReference type="SUPFAM" id="SSF102114">
    <property type="entry name" value="Radical SAM enzymes"/>
    <property type="match status" value="1"/>
</dbReference>
<dbReference type="PROSITE" id="PS01305">
    <property type="entry name" value="MOAA_NIFB_PQQE"/>
    <property type="match status" value="1"/>
</dbReference>
<dbReference type="PROSITE" id="PS51918">
    <property type="entry name" value="RADICAL_SAM"/>
    <property type="match status" value="1"/>
</dbReference>
<organism>
    <name type="scientific">Klebsiella pneumoniae (strain 342)</name>
    <dbReference type="NCBI Taxonomy" id="507522"/>
    <lineage>
        <taxon>Bacteria</taxon>
        <taxon>Pseudomonadati</taxon>
        <taxon>Pseudomonadota</taxon>
        <taxon>Gammaproteobacteria</taxon>
        <taxon>Enterobacterales</taxon>
        <taxon>Enterobacteriaceae</taxon>
        <taxon>Klebsiella/Raoultella group</taxon>
        <taxon>Klebsiella</taxon>
        <taxon>Klebsiella pneumoniae complex</taxon>
    </lineage>
</organism>
<sequence>MSQNKPAVNPPLWLLAELTYRCPLQCPYCSNPLDFARQEKELTTEQWIEVFRQARAMGSVQLGFSGGEPLTRKDLPELIRAARDLGFYTNLITSGIGLTESKLDAFSEAGLDHIQISFQASDEVLNAALAGNKKAFQQKLAMARAVKARDYPMVLNFVLHRHNIDQLDKIIELCIELEADDVELATCQFYGWAFLNREGLLPTREQIARAEQVVADYRQKMAASGNLTNLLFVTPDYYEERPKGCMGGWGSIFLSVTPEGTALPCHSARQLPVAFPSVLEQSLESIWYDSFGFNRYRGYDWMPEPCRSCDEKEKDFGGCRCQAFMLTGSADNADPVCSKSPHHHKILEARREAACSDIKVSQLQFRNRTRSQLIYKTREL</sequence>
<reference key="1">
    <citation type="journal article" date="2008" name="PLoS Genet.">
        <title>Complete genome sequence of the N2-fixing broad host range endophyte Klebsiella pneumoniae 342 and virulence predictions verified in mice.</title>
        <authorList>
            <person name="Fouts D.E."/>
            <person name="Tyler H.L."/>
            <person name="DeBoy R.T."/>
            <person name="Daugherty S."/>
            <person name="Ren Q."/>
            <person name="Badger J.H."/>
            <person name="Durkin A.S."/>
            <person name="Huot H."/>
            <person name="Shrivastava S."/>
            <person name="Kothari S."/>
            <person name="Dodson R.J."/>
            <person name="Mohamoud Y."/>
            <person name="Khouri H."/>
            <person name="Roesch L.F.W."/>
            <person name="Krogfelt K.A."/>
            <person name="Struve C."/>
            <person name="Triplett E.W."/>
            <person name="Methe B.A."/>
        </authorList>
    </citation>
    <scope>NUCLEOTIDE SEQUENCE [LARGE SCALE GENOMIC DNA]</scope>
    <source>
        <strain>342</strain>
    </source>
</reference>
<gene>
    <name evidence="1" type="primary">pqqE</name>
    <name type="ordered locus">KPK_2541</name>
</gene>
<accession>B5XX58</accession>
<proteinExistence type="inferred from homology"/>
<name>PQQE_KLEP3</name>
<feature type="chain" id="PRO_1000131276" description="PqqA peptide cyclase">
    <location>
        <begin position="1"/>
        <end position="380"/>
    </location>
</feature>
<feature type="domain" description="Radical SAM core" evidence="2">
    <location>
        <begin position="8"/>
        <end position="223"/>
    </location>
</feature>
<feature type="binding site" evidence="1">
    <location>
        <position position="22"/>
    </location>
    <ligand>
        <name>[4Fe-4S] cluster</name>
        <dbReference type="ChEBI" id="CHEBI:49883"/>
        <note>4Fe-4S-S-AdoMet</note>
    </ligand>
</feature>
<feature type="binding site" evidence="1">
    <location>
        <position position="26"/>
    </location>
    <ligand>
        <name>[4Fe-4S] cluster</name>
        <dbReference type="ChEBI" id="CHEBI:49883"/>
        <note>4Fe-4S-S-AdoMet</note>
    </ligand>
</feature>
<feature type="binding site" evidence="1">
    <location>
        <position position="29"/>
    </location>
    <ligand>
        <name>[4Fe-4S] cluster</name>
        <dbReference type="ChEBI" id="CHEBI:49883"/>
        <note>4Fe-4S-S-AdoMet</note>
    </ligand>
</feature>
<keyword id="KW-0004">4Fe-4S</keyword>
<keyword id="KW-0408">Iron</keyword>
<keyword id="KW-0411">Iron-sulfur</keyword>
<keyword id="KW-0479">Metal-binding</keyword>
<keyword id="KW-0560">Oxidoreductase</keyword>
<keyword id="KW-0884">PQQ biosynthesis</keyword>
<keyword id="KW-0949">S-adenosyl-L-methionine</keyword>